<protein>
    <recommendedName>
        <fullName evidence="1">Integration host factor subunit alpha</fullName>
        <shortName evidence="1">IHF-alpha</shortName>
    </recommendedName>
</protein>
<dbReference type="EMBL" id="CP001359">
    <property type="protein sequence ID" value="ACL65335.1"/>
    <property type="molecule type" value="Genomic_DNA"/>
</dbReference>
<dbReference type="RefSeq" id="WP_012525951.1">
    <property type="nucleotide sequence ID" value="NC_011891.1"/>
</dbReference>
<dbReference type="SMR" id="B8J836"/>
<dbReference type="KEGG" id="acp:A2cp1_1994"/>
<dbReference type="HOGENOM" id="CLU_105066_1_3_7"/>
<dbReference type="Proteomes" id="UP000007089">
    <property type="component" value="Chromosome"/>
</dbReference>
<dbReference type="GO" id="GO:0005829">
    <property type="term" value="C:cytosol"/>
    <property type="evidence" value="ECO:0007669"/>
    <property type="project" value="TreeGrafter"/>
</dbReference>
<dbReference type="GO" id="GO:0003677">
    <property type="term" value="F:DNA binding"/>
    <property type="evidence" value="ECO:0007669"/>
    <property type="project" value="UniProtKB-UniRule"/>
</dbReference>
<dbReference type="GO" id="GO:0030527">
    <property type="term" value="F:structural constituent of chromatin"/>
    <property type="evidence" value="ECO:0007669"/>
    <property type="project" value="InterPro"/>
</dbReference>
<dbReference type="GO" id="GO:0006310">
    <property type="term" value="P:DNA recombination"/>
    <property type="evidence" value="ECO:0007669"/>
    <property type="project" value="UniProtKB-UniRule"/>
</dbReference>
<dbReference type="GO" id="GO:0009893">
    <property type="term" value="P:positive regulation of metabolic process"/>
    <property type="evidence" value="ECO:0007669"/>
    <property type="project" value="UniProtKB-ARBA"/>
</dbReference>
<dbReference type="GO" id="GO:0006355">
    <property type="term" value="P:regulation of DNA-templated transcription"/>
    <property type="evidence" value="ECO:0007669"/>
    <property type="project" value="UniProtKB-UniRule"/>
</dbReference>
<dbReference type="GO" id="GO:0006417">
    <property type="term" value="P:regulation of translation"/>
    <property type="evidence" value="ECO:0007669"/>
    <property type="project" value="UniProtKB-UniRule"/>
</dbReference>
<dbReference type="CDD" id="cd13835">
    <property type="entry name" value="IHF_A"/>
    <property type="match status" value="1"/>
</dbReference>
<dbReference type="FunFam" id="4.10.520.10:FF:000010">
    <property type="entry name" value="Integration host factor subunit alpha"/>
    <property type="match status" value="1"/>
</dbReference>
<dbReference type="Gene3D" id="4.10.520.10">
    <property type="entry name" value="IHF-like DNA-binding proteins"/>
    <property type="match status" value="1"/>
</dbReference>
<dbReference type="HAMAP" id="MF_00380">
    <property type="entry name" value="IHF_alpha"/>
    <property type="match status" value="1"/>
</dbReference>
<dbReference type="InterPro" id="IPR000119">
    <property type="entry name" value="Hist_DNA-bd"/>
</dbReference>
<dbReference type="InterPro" id="IPR020816">
    <property type="entry name" value="Histone-like_DNA-bd_CS"/>
</dbReference>
<dbReference type="InterPro" id="IPR010992">
    <property type="entry name" value="IHF-like_DNA-bd_dom_sf"/>
</dbReference>
<dbReference type="InterPro" id="IPR005684">
    <property type="entry name" value="IHF_alpha"/>
</dbReference>
<dbReference type="NCBIfam" id="TIGR00987">
    <property type="entry name" value="himA"/>
    <property type="match status" value="1"/>
</dbReference>
<dbReference type="NCBIfam" id="NF001401">
    <property type="entry name" value="PRK00285.1"/>
    <property type="match status" value="1"/>
</dbReference>
<dbReference type="PANTHER" id="PTHR33175">
    <property type="entry name" value="DNA-BINDING PROTEIN HU"/>
    <property type="match status" value="1"/>
</dbReference>
<dbReference type="PANTHER" id="PTHR33175:SF2">
    <property type="entry name" value="INTEGRATION HOST FACTOR SUBUNIT ALPHA"/>
    <property type="match status" value="1"/>
</dbReference>
<dbReference type="Pfam" id="PF00216">
    <property type="entry name" value="Bac_DNA_binding"/>
    <property type="match status" value="1"/>
</dbReference>
<dbReference type="PRINTS" id="PR01727">
    <property type="entry name" value="DNABINDINGHU"/>
</dbReference>
<dbReference type="SMART" id="SM00411">
    <property type="entry name" value="BHL"/>
    <property type="match status" value="1"/>
</dbReference>
<dbReference type="SUPFAM" id="SSF47729">
    <property type="entry name" value="IHF-like DNA-binding proteins"/>
    <property type="match status" value="1"/>
</dbReference>
<dbReference type="PROSITE" id="PS00045">
    <property type="entry name" value="HISTONE_LIKE"/>
    <property type="match status" value="1"/>
</dbReference>
<accession>B8J836</accession>
<name>IHFA_ANAD2</name>
<comment type="function">
    <text evidence="1">This protein is one of the two subunits of integration host factor, a specific DNA-binding protein that functions in genetic recombination as well as in transcriptional and translational control.</text>
</comment>
<comment type="subunit">
    <text evidence="1">Heterodimer of an alpha and a beta chain.</text>
</comment>
<comment type="similarity">
    <text evidence="1">Belongs to the bacterial histone-like protein family.</text>
</comment>
<reference key="1">
    <citation type="submission" date="2009-01" db="EMBL/GenBank/DDBJ databases">
        <title>Complete sequence of Anaeromyxobacter dehalogenans 2CP-1.</title>
        <authorList>
            <person name="Lucas S."/>
            <person name="Copeland A."/>
            <person name="Lapidus A."/>
            <person name="Glavina del Rio T."/>
            <person name="Dalin E."/>
            <person name="Tice H."/>
            <person name="Bruce D."/>
            <person name="Goodwin L."/>
            <person name="Pitluck S."/>
            <person name="Saunders E."/>
            <person name="Brettin T."/>
            <person name="Detter J.C."/>
            <person name="Han C."/>
            <person name="Larimer F."/>
            <person name="Land M."/>
            <person name="Hauser L."/>
            <person name="Kyrpides N."/>
            <person name="Ovchinnikova G."/>
            <person name="Beliaev A.S."/>
            <person name="Richardson P."/>
        </authorList>
    </citation>
    <scope>NUCLEOTIDE SEQUENCE [LARGE SCALE GENOMIC DNA]</scope>
    <source>
        <strain>2CP-1 / ATCC BAA-258</strain>
    </source>
</reference>
<sequence length="113" mass="12614">MTKADIIESVYEKVGFSKKEAAEIVEMVFDTIKETLERGEKIKISGFGNFIVRDKKSRVGRNPQTGEEIEISARRVLTFRPSQVLKNALNGEVSDETTEGADDDDDEEGEGDE</sequence>
<evidence type="ECO:0000255" key="1">
    <source>
        <dbReference type="HAMAP-Rule" id="MF_00380"/>
    </source>
</evidence>
<evidence type="ECO:0000256" key="2">
    <source>
        <dbReference type="SAM" id="MobiDB-lite"/>
    </source>
</evidence>
<feature type="chain" id="PRO_1000190417" description="Integration host factor subunit alpha">
    <location>
        <begin position="1"/>
        <end position="113"/>
    </location>
</feature>
<feature type="region of interest" description="Disordered" evidence="2">
    <location>
        <begin position="87"/>
        <end position="113"/>
    </location>
</feature>
<feature type="compositionally biased region" description="Acidic residues" evidence="2">
    <location>
        <begin position="93"/>
        <end position="113"/>
    </location>
</feature>
<gene>
    <name evidence="1" type="primary">ihfA</name>
    <name evidence="1" type="synonym">himA</name>
    <name type="ordered locus">A2cp1_1994</name>
</gene>
<keyword id="KW-0233">DNA recombination</keyword>
<keyword id="KW-0238">DNA-binding</keyword>
<keyword id="KW-0804">Transcription</keyword>
<keyword id="KW-0805">Transcription regulation</keyword>
<keyword id="KW-0810">Translation regulation</keyword>
<proteinExistence type="inferred from homology"/>
<organism>
    <name type="scientific">Anaeromyxobacter dehalogenans (strain 2CP-1 / ATCC BAA-258)</name>
    <dbReference type="NCBI Taxonomy" id="455488"/>
    <lineage>
        <taxon>Bacteria</taxon>
        <taxon>Pseudomonadati</taxon>
        <taxon>Myxococcota</taxon>
        <taxon>Myxococcia</taxon>
        <taxon>Myxococcales</taxon>
        <taxon>Cystobacterineae</taxon>
        <taxon>Anaeromyxobacteraceae</taxon>
        <taxon>Anaeromyxobacter</taxon>
    </lineage>
</organism>